<keyword id="KW-0963">Cytoplasm</keyword>
<keyword id="KW-0342">GTP-binding</keyword>
<keyword id="KW-0396">Initiation factor</keyword>
<keyword id="KW-0547">Nucleotide-binding</keyword>
<keyword id="KW-0648">Protein biosynthesis</keyword>
<organism>
    <name type="scientific">Salmonella paratyphi B (strain ATCC BAA-1250 / SPB7)</name>
    <dbReference type="NCBI Taxonomy" id="1016998"/>
    <lineage>
        <taxon>Bacteria</taxon>
        <taxon>Pseudomonadati</taxon>
        <taxon>Pseudomonadota</taxon>
        <taxon>Gammaproteobacteria</taxon>
        <taxon>Enterobacterales</taxon>
        <taxon>Enterobacteriaceae</taxon>
        <taxon>Salmonella</taxon>
    </lineage>
</organism>
<gene>
    <name evidence="2" type="primary">infB</name>
    <name type="ordered locus">SPAB_04098</name>
</gene>
<protein>
    <recommendedName>
        <fullName evidence="2">Translation initiation factor IF-2</fullName>
    </recommendedName>
</protein>
<reference key="1">
    <citation type="submission" date="2007-11" db="EMBL/GenBank/DDBJ databases">
        <authorList>
            <consortium name="The Salmonella enterica serovar Paratyphi B Genome Sequencing Project"/>
            <person name="McClelland M."/>
            <person name="Sanderson E.K."/>
            <person name="Porwollik S."/>
            <person name="Spieth J."/>
            <person name="Clifton W.S."/>
            <person name="Fulton R."/>
            <person name="Cordes M."/>
            <person name="Wollam A."/>
            <person name="Shah N."/>
            <person name="Pepin K."/>
            <person name="Bhonagiri V."/>
            <person name="Nash W."/>
            <person name="Johnson M."/>
            <person name="Thiruvilangam P."/>
            <person name="Wilson R."/>
        </authorList>
    </citation>
    <scope>NUCLEOTIDE SEQUENCE [LARGE SCALE GENOMIC DNA]</scope>
    <source>
        <strain>ATCC BAA-1250 / SPB7</strain>
    </source>
</reference>
<sequence>MTDVTLKALAAERQVSVDRLVQQFADAGIRKSADDSVSAQEKQTLLAHLNREAVSGPDKLTLQRKTRSTLNIPGTGGKSKSVQIEVRKKRTFVKRDPQEAERLAAEEQAQREAEEQARREAEEQAKREAQQKAEREAAEQAKREAAEKAKREAAEKDKVSNQQTDDMTKTAQAEKARRENEAAELKRKAEEEARRKLEEEARRVAEEARRMAEENKWTATPEPVEDTSDYHVTTSQHARQAEDENDREVEGGRGRGRNAKAARPAKKGKHAESKADREEARAAVRGGKGGKRKGSSLQQGFQKPAQAVNRDVVIGETITVGELANKMAVKGSQVIKAMMKLGAMATINQVIDQETAQLVAEEMGHKVILRRENELEEAVMSDRDTGAAAEPRAPVVTIMGHVDHGKTSLLDYIRSTKVASGEAGGITQHIGAYHVETDNGMITFLDTPGHAAFTSMRARGAQATDIVVLVVAADDGVMPQTIEAIQHAKAAGVPVVVAVNKIDKPEADPDRVKNELSQYGILPEEWGGESQFVHVSAKAGTGIDELLDAILLQAEVLELKAVRKGMASGAVIESFLDKGRGPVATVLVREGTLHKGDIVLCGFEYGRVRAMRNELGQEVLEAGPSIPVEILGLSGVPAAGDEVTVVRDEKKAREVALYRQGKFREVKLARQQKSKLENMFANMTEGEVHEVNIVLKADVQGSVEAISDSLLKLSTDEVKVKIIGSGVGGITETDATLAAASNAILVGFNVRADASARKVIESESLDLRYYSVIYNLIDEVKAAMSGMLSPELKQQIIGLAEVRDVFKSPKFGAIAGCMVTEGTIKRHNPIRVLRDNVVIYEGELESLRRFKDDVNEVRNGMECGIGVKNYNDVRVGDMIEVFEIIEIQRTIA</sequence>
<evidence type="ECO:0000250" key="1"/>
<evidence type="ECO:0000255" key="2">
    <source>
        <dbReference type="HAMAP-Rule" id="MF_00100"/>
    </source>
</evidence>
<evidence type="ECO:0000256" key="3">
    <source>
        <dbReference type="SAM" id="MobiDB-lite"/>
    </source>
</evidence>
<dbReference type="EMBL" id="CP000886">
    <property type="protein sequence ID" value="ABX69424.1"/>
    <property type="molecule type" value="Genomic_DNA"/>
</dbReference>
<dbReference type="RefSeq" id="WP_000133064.1">
    <property type="nucleotide sequence ID" value="NC_010102.1"/>
</dbReference>
<dbReference type="SMR" id="A9N732"/>
<dbReference type="KEGG" id="spq:SPAB_04098"/>
<dbReference type="PATRIC" id="fig|1016998.12.peg.3861"/>
<dbReference type="HOGENOM" id="CLU_006301_6_3_6"/>
<dbReference type="BioCyc" id="SENT1016998:SPAB_RS16650-MONOMER"/>
<dbReference type="Proteomes" id="UP000008556">
    <property type="component" value="Chromosome"/>
</dbReference>
<dbReference type="GO" id="GO:0005829">
    <property type="term" value="C:cytosol"/>
    <property type="evidence" value="ECO:0007669"/>
    <property type="project" value="TreeGrafter"/>
</dbReference>
<dbReference type="GO" id="GO:0005525">
    <property type="term" value="F:GTP binding"/>
    <property type="evidence" value="ECO:0007669"/>
    <property type="project" value="UniProtKB-KW"/>
</dbReference>
<dbReference type="GO" id="GO:0003924">
    <property type="term" value="F:GTPase activity"/>
    <property type="evidence" value="ECO:0007669"/>
    <property type="project" value="UniProtKB-UniRule"/>
</dbReference>
<dbReference type="GO" id="GO:0097216">
    <property type="term" value="F:guanosine tetraphosphate binding"/>
    <property type="evidence" value="ECO:0007669"/>
    <property type="project" value="UniProtKB-ARBA"/>
</dbReference>
<dbReference type="GO" id="GO:0003743">
    <property type="term" value="F:translation initiation factor activity"/>
    <property type="evidence" value="ECO:0007669"/>
    <property type="project" value="UniProtKB-UniRule"/>
</dbReference>
<dbReference type="CDD" id="cd01887">
    <property type="entry name" value="IF2_eIF5B"/>
    <property type="match status" value="1"/>
</dbReference>
<dbReference type="CDD" id="cd03702">
    <property type="entry name" value="IF2_mtIF2_II"/>
    <property type="match status" value="1"/>
</dbReference>
<dbReference type="CDD" id="cd03692">
    <property type="entry name" value="mtIF2_IVc"/>
    <property type="match status" value="1"/>
</dbReference>
<dbReference type="FunFam" id="2.40.30.10:FF:000007">
    <property type="entry name" value="Translation initiation factor IF-2"/>
    <property type="match status" value="1"/>
</dbReference>
<dbReference type="FunFam" id="2.40.30.10:FF:000008">
    <property type="entry name" value="Translation initiation factor IF-2"/>
    <property type="match status" value="1"/>
</dbReference>
<dbReference type="FunFam" id="3.30.56.50:FF:000001">
    <property type="entry name" value="Translation initiation factor IF-2"/>
    <property type="match status" value="1"/>
</dbReference>
<dbReference type="FunFam" id="3.40.50.10050:FF:000001">
    <property type="entry name" value="Translation initiation factor IF-2"/>
    <property type="match status" value="1"/>
</dbReference>
<dbReference type="FunFam" id="3.40.50.300:FF:000019">
    <property type="entry name" value="Translation initiation factor IF-2"/>
    <property type="match status" value="1"/>
</dbReference>
<dbReference type="Gene3D" id="3.40.50.300">
    <property type="entry name" value="P-loop containing nucleotide triphosphate hydrolases"/>
    <property type="match status" value="1"/>
</dbReference>
<dbReference type="Gene3D" id="3.30.56.50">
    <property type="entry name" value="Putative DNA-binding domain, N-terminal subdomain of bacterial translation initiation factor IF2"/>
    <property type="match status" value="1"/>
</dbReference>
<dbReference type="Gene3D" id="2.40.30.10">
    <property type="entry name" value="Translation factors"/>
    <property type="match status" value="2"/>
</dbReference>
<dbReference type="Gene3D" id="3.40.50.10050">
    <property type="entry name" value="Translation initiation factor IF- 2, domain 3"/>
    <property type="match status" value="1"/>
</dbReference>
<dbReference type="HAMAP" id="MF_00100_B">
    <property type="entry name" value="IF_2_B"/>
    <property type="match status" value="1"/>
</dbReference>
<dbReference type="InterPro" id="IPR009061">
    <property type="entry name" value="DNA-bd_dom_put_sf"/>
</dbReference>
<dbReference type="InterPro" id="IPR053905">
    <property type="entry name" value="EF-G-like_DII"/>
</dbReference>
<dbReference type="InterPro" id="IPR004161">
    <property type="entry name" value="EFTu-like_2"/>
</dbReference>
<dbReference type="InterPro" id="IPR013575">
    <property type="entry name" value="IF2_assoc_dom_bac"/>
</dbReference>
<dbReference type="InterPro" id="IPR044145">
    <property type="entry name" value="IF2_II"/>
</dbReference>
<dbReference type="InterPro" id="IPR006847">
    <property type="entry name" value="IF2_N"/>
</dbReference>
<dbReference type="InterPro" id="IPR027417">
    <property type="entry name" value="P-loop_NTPase"/>
</dbReference>
<dbReference type="InterPro" id="IPR005225">
    <property type="entry name" value="Small_GTP-bd"/>
</dbReference>
<dbReference type="InterPro" id="IPR000795">
    <property type="entry name" value="T_Tr_GTP-bd_dom"/>
</dbReference>
<dbReference type="InterPro" id="IPR000178">
    <property type="entry name" value="TF_IF2_bacterial-like"/>
</dbReference>
<dbReference type="InterPro" id="IPR015760">
    <property type="entry name" value="TIF_IF2"/>
</dbReference>
<dbReference type="InterPro" id="IPR023115">
    <property type="entry name" value="TIF_IF2_dom3"/>
</dbReference>
<dbReference type="InterPro" id="IPR036925">
    <property type="entry name" value="TIF_IF2_dom3_sf"/>
</dbReference>
<dbReference type="InterPro" id="IPR009000">
    <property type="entry name" value="Transl_B-barrel_sf"/>
</dbReference>
<dbReference type="NCBIfam" id="TIGR00487">
    <property type="entry name" value="IF-2"/>
    <property type="match status" value="1"/>
</dbReference>
<dbReference type="NCBIfam" id="TIGR00231">
    <property type="entry name" value="small_GTP"/>
    <property type="match status" value="1"/>
</dbReference>
<dbReference type="PANTHER" id="PTHR43381:SF5">
    <property type="entry name" value="TR-TYPE G DOMAIN-CONTAINING PROTEIN"/>
    <property type="match status" value="1"/>
</dbReference>
<dbReference type="PANTHER" id="PTHR43381">
    <property type="entry name" value="TRANSLATION INITIATION FACTOR IF-2-RELATED"/>
    <property type="match status" value="1"/>
</dbReference>
<dbReference type="Pfam" id="PF22042">
    <property type="entry name" value="EF-G_D2"/>
    <property type="match status" value="1"/>
</dbReference>
<dbReference type="Pfam" id="PF00009">
    <property type="entry name" value="GTP_EFTU"/>
    <property type="match status" value="1"/>
</dbReference>
<dbReference type="Pfam" id="PF03144">
    <property type="entry name" value="GTP_EFTU_D2"/>
    <property type="match status" value="1"/>
</dbReference>
<dbReference type="Pfam" id="PF11987">
    <property type="entry name" value="IF-2"/>
    <property type="match status" value="1"/>
</dbReference>
<dbReference type="Pfam" id="PF08364">
    <property type="entry name" value="IF2_assoc"/>
    <property type="match status" value="1"/>
</dbReference>
<dbReference type="Pfam" id="PF04760">
    <property type="entry name" value="IF2_N"/>
    <property type="match status" value="2"/>
</dbReference>
<dbReference type="SUPFAM" id="SSF52156">
    <property type="entry name" value="Initiation factor IF2/eIF5b, domain 3"/>
    <property type="match status" value="1"/>
</dbReference>
<dbReference type="SUPFAM" id="SSF52540">
    <property type="entry name" value="P-loop containing nucleoside triphosphate hydrolases"/>
    <property type="match status" value="1"/>
</dbReference>
<dbReference type="SUPFAM" id="SSF46955">
    <property type="entry name" value="Putative DNA-binding domain"/>
    <property type="match status" value="1"/>
</dbReference>
<dbReference type="SUPFAM" id="SSF50447">
    <property type="entry name" value="Translation proteins"/>
    <property type="match status" value="2"/>
</dbReference>
<dbReference type="PROSITE" id="PS51722">
    <property type="entry name" value="G_TR_2"/>
    <property type="match status" value="1"/>
</dbReference>
<dbReference type="PROSITE" id="PS01176">
    <property type="entry name" value="IF2"/>
    <property type="match status" value="1"/>
</dbReference>
<feature type="chain" id="PRO_1000075617" description="Translation initiation factor IF-2">
    <location>
        <begin position="1"/>
        <end position="892"/>
    </location>
</feature>
<feature type="domain" description="tr-type G">
    <location>
        <begin position="391"/>
        <end position="560"/>
    </location>
</feature>
<feature type="region of interest" description="Disordered" evidence="3">
    <location>
        <begin position="88"/>
        <end position="305"/>
    </location>
</feature>
<feature type="region of interest" description="G1" evidence="1">
    <location>
        <begin position="400"/>
        <end position="407"/>
    </location>
</feature>
<feature type="region of interest" description="G2" evidence="1">
    <location>
        <begin position="425"/>
        <end position="429"/>
    </location>
</feature>
<feature type="region of interest" description="G3" evidence="1">
    <location>
        <begin position="446"/>
        <end position="449"/>
    </location>
</feature>
<feature type="region of interest" description="G4" evidence="1">
    <location>
        <begin position="500"/>
        <end position="503"/>
    </location>
</feature>
<feature type="region of interest" description="G5" evidence="1">
    <location>
        <begin position="536"/>
        <end position="538"/>
    </location>
</feature>
<feature type="compositionally biased region" description="Basic and acidic residues" evidence="3">
    <location>
        <begin position="93"/>
        <end position="159"/>
    </location>
</feature>
<feature type="compositionally biased region" description="Basic and acidic residues" evidence="3">
    <location>
        <begin position="166"/>
        <end position="216"/>
    </location>
</feature>
<feature type="compositionally biased region" description="Basic residues" evidence="3">
    <location>
        <begin position="254"/>
        <end position="269"/>
    </location>
</feature>
<feature type="compositionally biased region" description="Basic and acidic residues" evidence="3">
    <location>
        <begin position="270"/>
        <end position="282"/>
    </location>
</feature>
<feature type="binding site" evidence="2">
    <location>
        <begin position="400"/>
        <end position="407"/>
    </location>
    <ligand>
        <name>GTP</name>
        <dbReference type="ChEBI" id="CHEBI:37565"/>
    </ligand>
</feature>
<feature type="binding site" evidence="2">
    <location>
        <begin position="446"/>
        <end position="450"/>
    </location>
    <ligand>
        <name>GTP</name>
        <dbReference type="ChEBI" id="CHEBI:37565"/>
    </ligand>
</feature>
<feature type="binding site" evidence="2">
    <location>
        <begin position="500"/>
        <end position="503"/>
    </location>
    <ligand>
        <name>GTP</name>
        <dbReference type="ChEBI" id="CHEBI:37565"/>
    </ligand>
</feature>
<proteinExistence type="inferred from homology"/>
<comment type="function">
    <text evidence="2">One of the essential components for the initiation of protein synthesis. Protects formylmethionyl-tRNA from spontaneous hydrolysis and promotes its binding to the 30S ribosomal subunits. Also involved in the hydrolysis of GTP during the formation of the 70S ribosomal complex.</text>
</comment>
<comment type="subcellular location">
    <subcellularLocation>
        <location evidence="2">Cytoplasm</location>
    </subcellularLocation>
</comment>
<comment type="similarity">
    <text evidence="2">Belongs to the TRAFAC class translation factor GTPase superfamily. Classic translation factor GTPase family. IF-2 subfamily.</text>
</comment>
<name>IF2_SALPB</name>
<accession>A9N732</accession>